<feature type="chain" id="PRO_0000218452" description="Probable metalloendopeptidase G1-type">
    <location>
        <begin position="1"/>
        <end position="590"/>
    </location>
</feature>
<feature type="active site" evidence="2">
    <location>
        <position position="44"/>
    </location>
</feature>
<feature type="binding site" evidence="2">
    <location>
        <position position="41"/>
    </location>
    <ligand>
        <name>Zn(2+)</name>
        <dbReference type="ChEBI" id="CHEBI:29105"/>
        <note>catalytic</note>
    </ligand>
</feature>
<feature type="binding site" evidence="2">
    <location>
        <position position="45"/>
    </location>
    <ligand>
        <name>Zn(2+)</name>
        <dbReference type="ChEBI" id="CHEBI:29105"/>
        <note>catalytic</note>
    </ligand>
</feature>
<name>PG085_YLDV</name>
<gene>
    <name type="ordered locus">50L</name>
</gene>
<keyword id="KW-0378">Hydrolase</keyword>
<keyword id="KW-0479">Metal-binding</keyword>
<keyword id="KW-0482">Metalloprotease</keyword>
<keyword id="KW-0645">Protease</keyword>
<keyword id="KW-0862">Zinc</keyword>
<evidence type="ECO:0000250" key="1"/>
<evidence type="ECO:0000255" key="2"/>
<evidence type="ECO:0000305" key="3"/>
<proteinExistence type="inferred from homology"/>
<dbReference type="EC" id="3.4.24.-"/>
<dbReference type="EMBL" id="AJ293568">
    <property type="protein sequence ID" value="CAC21288.1"/>
    <property type="molecule type" value="Genomic_DNA"/>
</dbReference>
<dbReference type="RefSeq" id="NP_073435.1">
    <property type="nucleotide sequence ID" value="NC_002642.1"/>
</dbReference>
<dbReference type="SMR" id="Q9DHR2"/>
<dbReference type="MEROPS" id="M44.001"/>
<dbReference type="GeneID" id="918685"/>
<dbReference type="KEGG" id="vg:918685"/>
<dbReference type="OrthoDB" id="1933at10239"/>
<dbReference type="Proteomes" id="UP000136581">
    <property type="component" value="Genome"/>
</dbReference>
<dbReference type="GO" id="GO:0004222">
    <property type="term" value="F:metalloendopeptidase activity"/>
    <property type="evidence" value="ECO:0007669"/>
    <property type="project" value="InterPro"/>
</dbReference>
<dbReference type="GO" id="GO:0008270">
    <property type="term" value="F:zinc ion binding"/>
    <property type="evidence" value="ECO:0007669"/>
    <property type="project" value="InterPro"/>
</dbReference>
<dbReference type="GO" id="GO:0006508">
    <property type="term" value="P:proteolysis"/>
    <property type="evidence" value="ECO:0007669"/>
    <property type="project" value="UniProtKB-KW"/>
</dbReference>
<dbReference type="GO" id="GO:0019058">
    <property type="term" value="P:viral life cycle"/>
    <property type="evidence" value="ECO:0007669"/>
    <property type="project" value="InterPro"/>
</dbReference>
<dbReference type="InterPro" id="IPR011249">
    <property type="entry name" value="Metalloenz_LuxS/M16"/>
</dbReference>
<dbReference type="InterPro" id="IPR005072">
    <property type="entry name" value="Peptidase_M44"/>
</dbReference>
<dbReference type="Pfam" id="PF03410">
    <property type="entry name" value="Peptidase_M44"/>
    <property type="match status" value="1"/>
</dbReference>
<dbReference type="PIRSF" id="PIRSF015679">
    <property type="entry name" value="Peptidase_M44"/>
    <property type="match status" value="1"/>
</dbReference>
<dbReference type="SUPFAM" id="SSF63411">
    <property type="entry name" value="LuxS/MPP-like metallohydrolase"/>
    <property type="match status" value="1"/>
</dbReference>
<comment type="function">
    <text evidence="1">Seems to be involved in viral proteins maturation by cleavage at Ala-Gly-|-Xaa motifs.</text>
</comment>
<comment type="cofactor">
    <cofactor evidence="3">
        <name>Zn(2+)</name>
        <dbReference type="ChEBI" id="CHEBI:29105"/>
    </cofactor>
    <text evidence="3">Binds 1 zinc ion.</text>
</comment>
<comment type="similarity">
    <text evidence="3">Belongs to the peptidase M44 family.</text>
</comment>
<accession>Q9DHR2</accession>
<protein>
    <recommendedName>
        <fullName>Probable metalloendopeptidase G1-type</fullName>
        <ecNumber>3.4.24.-</ecNumber>
    </recommendedName>
</protein>
<organismHost>
    <name type="scientific">Homo sapiens</name>
    <name type="common">Human</name>
    <dbReference type="NCBI Taxonomy" id="9606"/>
</organismHost>
<organismHost>
    <name type="scientific">Simiiformes</name>
    <dbReference type="NCBI Taxonomy" id="314293"/>
</organismHost>
<reference key="1">
    <citation type="journal article" date="2001" name="Virology">
        <title>The genome sequence of Yaba-like disease virus, a yatapoxvirus.</title>
        <authorList>
            <person name="Lee H.-J."/>
            <person name="Essani K."/>
            <person name="Smith G.L."/>
        </authorList>
    </citation>
    <scope>NUCLEOTIDE SEQUENCE [LARGE SCALE GENOMIC DNA]</scope>
</reference>
<organism>
    <name type="scientific">Yaba-like disease virus</name>
    <name type="common">YLDV</name>
    <dbReference type="NCBI Taxonomy" id="132475"/>
    <lineage>
        <taxon>Viruses</taxon>
        <taxon>Varidnaviria</taxon>
        <taxon>Bamfordvirae</taxon>
        <taxon>Nucleocytoviricota</taxon>
        <taxon>Pokkesviricetes</taxon>
        <taxon>Chitovirales</taxon>
        <taxon>Poxviridae</taxon>
        <taxon>Chordopoxvirinae</taxon>
        <taxon>Yatapoxvirus</taxon>
        <taxon>Tanapox virus</taxon>
    </lineage>
</organism>
<sequence length="590" mass="68626">MIVLSNGVRIFINSNMNKDIYLGIASFGFENDIGEILGIAHLLEHILISFDSSKFVANASTARKYMSFWCCSIKGKSNYIDSINTLISWFFNNNKLRDNFCLNDIKNHIKELENEYYFRNEVFHCMDVLTFLENGDLYNGGRIDMLNNLESVNNMLYNRMHKIIGPNIVIFVKELNKNCLMLIQNSFGTLPSCPMSFSFPNFSNIDGKIIMMPSPFYTVMIKVSLSISNVISIMCLFETYHLIDYETVGNDLYVTLSFVKESDYENFINGVSTLKFNNVPNYTVLSLCDDFLMNAYLCFPWLSNDINNYLSTVRYSQNMFKNLEEDIQNSILLKKYIVVYPHFSKTVFNKNDSQMHKIVILDCLNEIKEDQLPKLNVNLMKKQTKNEIFIKYNDSSLIKYIIFAIGYKNNILRGNEGVSIHHQFSSEDIKSILESDTFLKYSKSKPAAMYQYLLLSFFVSGYSIEDILLNRESTIKLLKQYNNKILFGKKSRYDITTKSNFVCGIIKNKNINNNVITNTMWELKKKGLIYSMEHTKIDKRIFYIFMFTIYPDEVFLYLSKKFLSHCLIVSKTGNIEDFSSMKKDVIIKLC</sequence>